<accession>Q9EYY3</accession>
<name>FTSB_KLEAE</name>
<proteinExistence type="inferred from homology"/>
<reference key="1">
    <citation type="journal article" date="2001" name="J. Bacteriol.">
        <title>Alternative pathways for siroheme synthesis in Klebsiella aerogenes.</title>
        <authorList>
            <person name="Kolko M.M."/>
            <person name="Kapetanovich L.A."/>
            <person name="Lawrence J.G."/>
        </authorList>
    </citation>
    <scope>NUCLEOTIDE SEQUENCE [GENOMIC DNA]</scope>
    <source>
        <strain>W70</strain>
    </source>
</reference>
<organism>
    <name type="scientific">Klebsiella aerogenes</name>
    <name type="common">Enterobacter aerogenes</name>
    <dbReference type="NCBI Taxonomy" id="548"/>
    <lineage>
        <taxon>Bacteria</taxon>
        <taxon>Pseudomonadati</taxon>
        <taxon>Pseudomonadota</taxon>
        <taxon>Gammaproteobacteria</taxon>
        <taxon>Enterobacterales</taxon>
        <taxon>Enterobacteriaceae</taxon>
        <taxon>Klebsiella/Raoultella group</taxon>
        <taxon>Klebsiella</taxon>
    </lineage>
</organism>
<gene>
    <name evidence="1" type="primary">ftsB</name>
</gene>
<feature type="chain" id="PRO_0000214447" description="Cell division protein FtsB">
    <location>
        <begin position="1"/>
        <end position="105"/>
    </location>
</feature>
<feature type="topological domain" description="Cytoplasmic" evidence="1">
    <location>
        <begin position="1"/>
        <end position="3"/>
    </location>
</feature>
<feature type="transmembrane region" description="Helical" evidence="1">
    <location>
        <begin position="4"/>
        <end position="21"/>
    </location>
</feature>
<feature type="topological domain" description="Periplasmic" evidence="1">
    <location>
        <begin position="22"/>
        <end position="105"/>
    </location>
</feature>
<feature type="coiled-coil region" evidence="1">
    <location>
        <begin position="33"/>
        <end position="62"/>
    </location>
</feature>
<sequence length="105" mass="11951">MGKLTLLLLALLVWLQYSLWFGKNGLHDYTRVNDDVTAQQATNAKLKARNDQLFAEIDDLNGGQEAIEERARNELSMTRPGETFYRLVPDASKRNQASGQQQNNR</sequence>
<protein>
    <recommendedName>
        <fullName evidence="1">Cell division protein FtsB</fullName>
    </recommendedName>
</protein>
<comment type="function">
    <text evidence="1">Essential cell division protein. May link together the upstream cell division proteins, which are predominantly cytoplasmic, with the downstream cell division proteins, which are predominantly periplasmic.</text>
</comment>
<comment type="subunit">
    <text evidence="1">Part of a complex composed of FtsB, FtsL and FtsQ.</text>
</comment>
<comment type="subcellular location">
    <subcellularLocation>
        <location evidence="1">Cell inner membrane</location>
        <topology evidence="1">Single-pass type II membrane protein</topology>
    </subcellularLocation>
    <text evidence="1">Localizes to the division septum.</text>
</comment>
<comment type="similarity">
    <text evidence="1">Belongs to the FtsB family.</text>
</comment>
<evidence type="ECO:0000255" key="1">
    <source>
        <dbReference type="HAMAP-Rule" id="MF_00599"/>
    </source>
</evidence>
<dbReference type="EMBL" id="AF308468">
    <property type="protein sequence ID" value="AAG42461.1"/>
    <property type="molecule type" value="Genomic_DNA"/>
</dbReference>
<dbReference type="SMR" id="Q9EYY3"/>
<dbReference type="STRING" id="548.EAG7_05121"/>
<dbReference type="GO" id="GO:0032153">
    <property type="term" value="C:cell division site"/>
    <property type="evidence" value="ECO:0007669"/>
    <property type="project" value="UniProtKB-UniRule"/>
</dbReference>
<dbReference type="GO" id="GO:0030428">
    <property type="term" value="C:cell septum"/>
    <property type="evidence" value="ECO:0007669"/>
    <property type="project" value="TreeGrafter"/>
</dbReference>
<dbReference type="GO" id="GO:0005886">
    <property type="term" value="C:plasma membrane"/>
    <property type="evidence" value="ECO:0007669"/>
    <property type="project" value="UniProtKB-SubCell"/>
</dbReference>
<dbReference type="GO" id="GO:0043093">
    <property type="term" value="P:FtsZ-dependent cytokinesis"/>
    <property type="evidence" value="ECO:0007669"/>
    <property type="project" value="UniProtKB-UniRule"/>
</dbReference>
<dbReference type="FunFam" id="1.20.5.400:FF:000001">
    <property type="entry name" value="Cell division protein FtsB"/>
    <property type="match status" value="1"/>
</dbReference>
<dbReference type="Gene3D" id="1.20.5.400">
    <property type="match status" value="1"/>
</dbReference>
<dbReference type="HAMAP" id="MF_00599">
    <property type="entry name" value="FtsB"/>
    <property type="match status" value="1"/>
</dbReference>
<dbReference type="InterPro" id="IPR023081">
    <property type="entry name" value="Cell_div_FtsB"/>
</dbReference>
<dbReference type="InterPro" id="IPR007060">
    <property type="entry name" value="FtsL/DivIC"/>
</dbReference>
<dbReference type="NCBIfam" id="NF002058">
    <property type="entry name" value="PRK00888.1"/>
    <property type="match status" value="1"/>
</dbReference>
<dbReference type="PANTHER" id="PTHR37485">
    <property type="entry name" value="CELL DIVISION PROTEIN FTSB"/>
    <property type="match status" value="1"/>
</dbReference>
<dbReference type="PANTHER" id="PTHR37485:SF1">
    <property type="entry name" value="CELL DIVISION PROTEIN FTSB"/>
    <property type="match status" value="1"/>
</dbReference>
<dbReference type="Pfam" id="PF04977">
    <property type="entry name" value="DivIC"/>
    <property type="match status" value="1"/>
</dbReference>
<keyword id="KW-0131">Cell cycle</keyword>
<keyword id="KW-0132">Cell division</keyword>
<keyword id="KW-0997">Cell inner membrane</keyword>
<keyword id="KW-1003">Cell membrane</keyword>
<keyword id="KW-0175">Coiled coil</keyword>
<keyword id="KW-0472">Membrane</keyword>
<keyword id="KW-0812">Transmembrane</keyword>
<keyword id="KW-1133">Transmembrane helix</keyword>